<accession>Q29K59</accession>
<dbReference type="EMBL" id="CH379061">
    <property type="protein sequence ID" value="EAL33319.2"/>
    <property type="molecule type" value="Genomic_DNA"/>
</dbReference>
<dbReference type="RefSeq" id="XP_001356256.2">
    <property type="nucleotide sequence ID" value="XM_001356220.3"/>
</dbReference>
<dbReference type="SMR" id="Q29K59"/>
<dbReference type="FunCoup" id="Q29K59">
    <property type="interactions" value="1810"/>
</dbReference>
<dbReference type="STRING" id="46245.Q29K59"/>
<dbReference type="EnsemblMetazoa" id="FBtr0289557">
    <property type="protein sequence ID" value="FBpp0287995"/>
    <property type="gene ID" value="FBgn0070201"/>
</dbReference>
<dbReference type="KEGG" id="dpo:4816297"/>
<dbReference type="CTD" id="348180"/>
<dbReference type="eggNOG" id="KOG2594">
    <property type="taxonomic scope" value="Eukaryota"/>
</dbReference>
<dbReference type="HOGENOM" id="CLU_024534_2_1_1"/>
<dbReference type="InParanoid" id="Q29K59"/>
<dbReference type="OMA" id="CHACRNI"/>
<dbReference type="UniPathway" id="UPA00988"/>
<dbReference type="Proteomes" id="UP000001819">
    <property type="component" value="Chromosome 4"/>
</dbReference>
<dbReference type="Bgee" id="FBgn0070201">
    <property type="expression patterns" value="Expressed in male reproductive system and 2 other cell types or tissues"/>
</dbReference>
<dbReference type="ExpressionAtlas" id="Q29K59">
    <property type="expression patterns" value="baseline"/>
</dbReference>
<dbReference type="GO" id="GO:0005829">
    <property type="term" value="C:cytosol"/>
    <property type="evidence" value="ECO:0000250"/>
    <property type="project" value="UniProtKB"/>
</dbReference>
<dbReference type="GO" id="GO:0016779">
    <property type="term" value="F:nucleotidyltransferase activity"/>
    <property type="evidence" value="ECO:0007669"/>
    <property type="project" value="UniProtKB-UniRule"/>
</dbReference>
<dbReference type="GO" id="GO:0016783">
    <property type="term" value="F:sulfurtransferase activity"/>
    <property type="evidence" value="ECO:0007669"/>
    <property type="project" value="TreeGrafter"/>
</dbReference>
<dbReference type="GO" id="GO:0000049">
    <property type="term" value="F:tRNA binding"/>
    <property type="evidence" value="ECO:0007669"/>
    <property type="project" value="InterPro"/>
</dbReference>
<dbReference type="GO" id="GO:0032447">
    <property type="term" value="P:protein urmylation"/>
    <property type="evidence" value="ECO:0007669"/>
    <property type="project" value="UniProtKB-UniRule"/>
</dbReference>
<dbReference type="GO" id="GO:0034227">
    <property type="term" value="P:tRNA thio-modification"/>
    <property type="evidence" value="ECO:0000250"/>
    <property type="project" value="UniProtKB"/>
</dbReference>
<dbReference type="GO" id="GO:0002143">
    <property type="term" value="P:tRNA wobble position uridine thiolation"/>
    <property type="evidence" value="ECO:0007669"/>
    <property type="project" value="TreeGrafter"/>
</dbReference>
<dbReference type="GO" id="GO:0002098">
    <property type="term" value="P:tRNA wobble uridine modification"/>
    <property type="evidence" value="ECO:0000250"/>
    <property type="project" value="UniProtKB"/>
</dbReference>
<dbReference type="FunFam" id="3.40.50.620:FF:000229">
    <property type="entry name" value="Cytoplasmic tRNA 2-thiolation protein 2"/>
    <property type="match status" value="1"/>
</dbReference>
<dbReference type="Gene3D" id="3.40.50.620">
    <property type="entry name" value="HUPs"/>
    <property type="match status" value="1"/>
</dbReference>
<dbReference type="HAMAP" id="MF_03054">
    <property type="entry name" value="CTU2"/>
    <property type="match status" value="1"/>
</dbReference>
<dbReference type="InterPro" id="IPR019407">
    <property type="entry name" value="CTU2"/>
</dbReference>
<dbReference type="InterPro" id="IPR014729">
    <property type="entry name" value="Rossmann-like_a/b/a_fold"/>
</dbReference>
<dbReference type="PANTHER" id="PTHR20882">
    <property type="entry name" value="CYTOPLASMIC TRNA 2-THIOLATION PROTEIN 2"/>
    <property type="match status" value="1"/>
</dbReference>
<dbReference type="PANTHER" id="PTHR20882:SF14">
    <property type="entry name" value="CYTOPLASMIC TRNA 2-THIOLATION PROTEIN 2"/>
    <property type="match status" value="1"/>
</dbReference>
<dbReference type="Pfam" id="PF10288">
    <property type="entry name" value="CTU2"/>
    <property type="match status" value="1"/>
</dbReference>
<dbReference type="SUPFAM" id="SSF52402">
    <property type="entry name" value="Adenine nucleotide alpha hydrolases-like"/>
    <property type="match status" value="1"/>
</dbReference>
<organism>
    <name type="scientific">Drosophila pseudoobscura pseudoobscura</name>
    <name type="common">Fruit fly</name>
    <dbReference type="NCBI Taxonomy" id="46245"/>
    <lineage>
        <taxon>Eukaryota</taxon>
        <taxon>Metazoa</taxon>
        <taxon>Ecdysozoa</taxon>
        <taxon>Arthropoda</taxon>
        <taxon>Hexapoda</taxon>
        <taxon>Insecta</taxon>
        <taxon>Pterygota</taxon>
        <taxon>Neoptera</taxon>
        <taxon>Endopterygota</taxon>
        <taxon>Diptera</taxon>
        <taxon>Brachycera</taxon>
        <taxon>Muscomorpha</taxon>
        <taxon>Ephydroidea</taxon>
        <taxon>Drosophilidae</taxon>
        <taxon>Drosophila</taxon>
        <taxon>Sophophora</taxon>
    </lineage>
</organism>
<name>CTU2_DROPS</name>
<proteinExistence type="inferred from homology"/>
<comment type="function">
    <text evidence="1">Plays a central role in 2-thiolation of mcm(5)S(2)U at tRNA wobble positions of tRNA(Lys), tRNA(Glu) and tRNA(Gln). May act by forming a heterodimer with NCS6/CTU1 that ligates sulfur from thiocarboxylated URM1 onto the uridine of tRNAs at wobble position.</text>
</comment>
<comment type="pathway">
    <text evidence="1">tRNA modification; 5-methoxycarbonylmethyl-2-thiouridine-tRNA biosynthesis.</text>
</comment>
<comment type="subcellular location">
    <subcellularLocation>
        <location evidence="1">Cytoplasm</location>
    </subcellularLocation>
</comment>
<comment type="similarity">
    <text evidence="1">Belongs to the CTU2/NCS2 family.</text>
</comment>
<protein>
    <recommendedName>
        <fullName evidence="1">Cytoplasmic tRNA 2-thiolation protein 2</fullName>
    </recommendedName>
</protein>
<feature type="chain" id="PRO_0000369275" description="Cytoplasmic tRNA 2-thiolation protein 2">
    <location>
        <begin position="1"/>
        <end position="405"/>
    </location>
</feature>
<evidence type="ECO:0000255" key="1">
    <source>
        <dbReference type="HAMAP-Rule" id="MF_03054"/>
    </source>
</evidence>
<gene>
    <name type="ORF">GA10142</name>
</gene>
<sequence>MCSIGEDDFGDEGATHAMVAESLPTGIVISPGDCNKCGVVSSELYKLNFRVAECRDCFLNHARHKFRASLGAAKVLPRNAEVLLAVDGSAESLVLLDMLHFAQTQNTFRRLHCNARVVYIDDQSVHGGESMNLQALQALGTRYEPLEFYVVELGASACSLQRLGQYSTSLKEPNGLNTKLEKLRSLTARQDYHQQQRKNLLASVAQKLSCSHVFEPSVSGDLAAQLLTSITLGRGGSAALDVALLDDRLAAGVKLLRPLRDLNEQEVRFYVHACQLKPLRESGSSYGQERGQTASLQNLTAAFVGNLQQNYPATVSTVFRTGDKIAANAHMEQASCAQCQSPLDAKLSDTLLANEYSRAVSEAGVGLSKDGDASESLAKQRLEFKDGLCHACRCIQLELGYDTLS</sequence>
<keyword id="KW-0963">Cytoplasm</keyword>
<keyword id="KW-1185">Reference proteome</keyword>
<keyword id="KW-0819">tRNA processing</keyword>
<reference key="1">
    <citation type="journal article" date="2005" name="Genome Res.">
        <title>Comparative genome sequencing of Drosophila pseudoobscura: chromosomal, gene, and cis-element evolution.</title>
        <authorList>
            <person name="Richards S."/>
            <person name="Liu Y."/>
            <person name="Bettencourt B.R."/>
            <person name="Hradecky P."/>
            <person name="Letovsky S."/>
            <person name="Nielsen R."/>
            <person name="Thornton K."/>
            <person name="Hubisz M.J."/>
            <person name="Chen R."/>
            <person name="Meisel R.P."/>
            <person name="Couronne O."/>
            <person name="Hua S."/>
            <person name="Smith M.A."/>
            <person name="Zhang P."/>
            <person name="Liu J."/>
            <person name="Bussemaker H.J."/>
            <person name="van Batenburg M.F."/>
            <person name="Howells S.L."/>
            <person name="Scherer S.E."/>
            <person name="Sodergren E."/>
            <person name="Matthews B.B."/>
            <person name="Crosby M.A."/>
            <person name="Schroeder A.J."/>
            <person name="Ortiz-Barrientos D."/>
            <person name="Rives C.M."/>
            <person name="Metzker M.L."/>
            <person name="Muzny D.M."/>
            <person name="Scott G."/>
            <person name="Steffen D."/>
            <person name="Wheeler D.A."/>
            <person name="Worley K.C."/>
            <person name="Havlak P."/>
            <person name="Durbin K.J."/>
            <person name="Egan A."/>
            <person name="Gill R."/>
            <person name="Hume J."/>
            <person name="Morgan M.B."/>
            <person name="Miner G."/>
            <person name="Hamilton C."/>
            <person name="Huang Y."/>
            <person name="Waldron L."/>
            <person name="Verduzco D."/>
            <person name="Clerc-Blankenburg K.P."/>
            <person name="Dubchak I."/>
            <person name="Noor M.A.F."/>
            <person name="Anderson W."/>
            <person name="White K.P."/>
            <person name="Clark A.G."/>
            <person name="Schaeffer S.W."/>
            <person name="Gelbart W.M."/>
            <person name="Weinstock G.M."/>
            <person name="Gibbs R.A."/>
        </authorList>
    </citation>
    <scope>NUCLEOTIDE SEQUENCE [LARGE SCALE GENOMIC DNA]</scope>
    <source>
        <strain>MV2-25 / Tucson 14011-0121.94</strain>
    </source>
</reference>